<dbReference type="EC" id="1.2.1.41" evidence="1"/>
<dbReference type="EMBL" id="AL591688">
    <property type="protein sequence ID" value="CAC47740.1"/>
    <property type="molecule type" value="Genomic_DNA"/>
</dbReference>
<dbReference type="RefSeq" id="NP_387267.1">
    <property type="nucleotide sequence ID" value="NC_003047.1"/>
</dbReference>
<dbReference type="RefSeq" id="WP_010970465.1">
    <property type="nucleotide sequence ID" value="NC_003047.1"/>
</dbReference>
<dbReference type="SMR" id="Q92LB2"/>
<dbReference type="EnsemblBacteria" id="CAC47740">
    <property type="protein sequence ID" value="CAC47740"/>
    <property type="gene ID" value="SMc03777"/>
</dbReference>
<dbReference type="KEGG" id="sme:SMc03777"/>
<dbReference type="PATRIC" id="fig|266834.11.peg.4709"/>
<dbReference type="eggNOG" id="COG0014">
    <property type="taxonomic scope" value="Bacteria"/>
</dbReference>
<dbReference type="HOGENOM" id="CLU_030231_0_0_5"/>
<dbReference type="OrthoDB" id="9809970at2"/>
<dbReference type="UniPathway" id="UPA00098">
    <property type="reaction ID" value="UER00360"/>
</dbReference>
<dbReference type="Proteomes" id="UP000001976">
    <property type="component" value="Chromosome"/>
</dbReference>
<dbReference type="GO" id="GO:0005737">
    <property type="term" value="C:cytoplasm"/>
    <property type="evidence" value="ECO:0007669"/>
    <property type="project" value="UniProtKB-SubCell"/>
</dbReference>
<dbReference type="GO" id="GO:0004350">
    <property type="term" value="F:glutamate-5-semialdehyde dehydrogenase activity"/>
    <property type="evidence" value="ECO:0007669"/>
    <property type="project" value="UniProtKB-UniRule"/>
</dbReference>
<dbReference type="GO" id="GO:0050661">
    <property type="term" value="F:NADP binding"/>
    <property type="evidence" value="ECO:0007669"/>
    <property type="project" value="InterPro"/>
</dbReference>
<dbReference type="GO" id="GO:0055129">
    <property type="term" value="P:L-proline biosynthetic process"/>
    <property type="evidence" value="ECO:0007669"/>
    <property type="project" value="UniProtKB-UniRule"/>
</dbReference>
<dbReference type="CDD" id="cd07079">
    <property type="entry name" value="ALDH_F18-19_ProA-GPR"/>
    <property type="match status" value="1"/>
</dbReference>
<dbReference type="Gene3D" id="3.40.605.10">
    <property type="entry name" value="Aldehyde Dehydrogenase, Chain A, domain 1"/>
    <property type="match status" value="1"/>
</dbReference>
<dbReference type="Gene3D" id="3.40.309.10">
    <property type="entry name" value="Aldehyde Dehydrogenase, Chain A, domain 2"/>
    <property type="match status" value="1"/>
</dbReference>
<dbReference type="HAMAP" id="MF_00412">
    <property type="entry name" value="ProA"/>
    <property type="match status" value="1"/>
</dbReference>
<dbReference type="InterPro" id="IPR016161">
    <property type="entry name" value="Ald_DH/histidinol_DH"/>
</dbReference>
<dbReference type="InterPro" id="IPR016163">
    <property type="entry name" value="Ald_DH_C"/>
</dbReference>
<dbReference type="InterPro" id="IPR016162">
    <property type="entry name" value="Ald_DH_N"/>
</dbReference>
<dbReference type="InterPro" id="IPR015590">
    <property type="entry name" value="Aldehyde_DH_dom"/>
</dbReference>
<dbReference type="InterPro" id="IPR020593">
    <property type="entry name" value="G-glutamylP_reductase_CS"/>
</dbReference>
<dbReference type="InterPro" id="IPR012134">
    <property type="entry name" value="Glu-5-SA_DH"/>
</dbReference>
<dbReference type="InterPro" id="IPR000965">
    <property type="entry name" value="GPR_dom"/>
</dbReference>
<dbReference type="NCBIfam" id="NF001221">
    <property type="entry name" value="PRK00197.1"/>
    <property type="match status" value="1"/>
</dbReference>
<dbReference type="NCBIfam" id="TIGR00407">
    <property type="entry name" value="proA"/>
    <property type="match status" value="1"/>
</dbReference>
<dbReference type="PANTHER" id="PTHR11063:SF8">
    <property type="entry name" value="DELTA-1-PYRROLINE-5-CARBOXYLATE SYNTHASE"/>
    <property type="match status" value="1"/>
</dbReference>
<dbReference type="PANTHER" id="PTHR11063">
    <property type="entry name" value="GLUTAMATE SEMIALDEHYDE DEHYDROGENASE"/>
    <property type="match status" value="1"/>
</dbReference>
<dbReference type="Pfam" id="PF00171">
    <property type="entry name" value="Aldedh"/>
    <property type="match status" value="1"/>
</dbReference>
<dbReference type="PIRSF" id="PIRSF000151">
    <property type="entry name" value="GPR"/>
    <property type="match status" value="1"/>
</dbReference>
<dbReference type="SUPFAM" id="SSF53720">
    <property type="entry name" value="ALDH-like"/>
    <property type="match status" value="1"/>
</dbReference>
<dbReference type="PROSITE" id="PS01223">
    <property type="entry name" value="PROA"/>
    <property type="match status" value="1"/>
</dbReference>
<comment type="function">
    <text evidence="1">Catalyzes the NADPH-dependent reduction of L-glutamate 5-phosphate into L-glutamate 5-semialdehyde and phosphate. The product spontaneously undergoes cyclization to form 1-pyrroline-5-carboxylate.</text>
</comment>
<comment type="catalytic activity">
    <reaction evidence="1">
        <text>L-glutamate 5-semialdehyde + phosphate + NADP(+) = L-glutamyl 5-phosphate + NADPH + H(+)</text>
        <dbReference type="Rhea" id="RHEA:19541"/>
        <dbReference type="ChEBI" id="CHEBI:15378"/>
        <dbReference type="ChEBI" id="CHEBI:43474"/>
        <dbReference type="ChEBI" id="CHEBI:57783"/>
        <dbReference type="ChEBI" id="CHEBI:58066"/>
        <dbReference type="ChEBI" id="CHEBI:58274"/>
        <dbReference type="ChEBI" id="CHEBI:58349"/>
        <dbReference type="EC" id="1.2.1.41"/>
    </reaction>
</comment>
<comment type="pathway">
    <text evidence="1">Amino-acid biosynthesis; L-proline biosynthesis; L-glutamate 5-semialdehyde from L-glutamate: step 2/2.</text>
</comment>
<comment type="subcellular location">
    <subcellularLocation>
        <location evidence="1">Cytoplasm</location>
    </subcellularLocation>
</comment>
<comment type="similarity">
    <text evidence="1">Belongs to the gamma-glutamyl phosphate reductase family.</text>
</comment>
<gene>
    <name evidence="1" type="primary">proA</name>
    <name type="ordered locus">R03161</name>
    <name type="ORF">SMc03777</name>
</gene>
<sequence length="427" mass="45207">MLETVEKDKDVNAMMLEIGRRAKAAARPLATASAERKHAALVAMAGVIVTRTAEILAANALDLENARESGVASAFIDRLTLTESRIRDMADGIRAIAELIDPVGEVISEWDRPNGLHIERVRTPLGVIGVIYESRPNVTADAGALCLKAGNAVILRGGSDSFHSSRAIHACLTEGLKVAGLPEDAIQMVPVADRAAVGAMLTGLNGAIDVIVPRGGKSLVARVQNEARVPVFAHLEGLCHIYVDASADRDMAKKIVVNAKMRRTGICGAAETLLIDRNAAEKFAKPLLEALVDAGCEVRASDDLASVMPGLKAATDEDWATEYLDAIISARLVDGISGAIEHINTWSSAHTEAVIAEDPAVVERFFSEIDSAILLHNASTQFADGGEFGMGGEIGIATGKMHARGPVGVEQLTSFKYRVRGTGQVRP</sequence>
<organism>
    <name type="scientific">Rhizobium meliloti (strain 1021)</name>
    <name type="common">Ensifer meliloti</name>
    <name type="synonym">Sinorhizobium meliloti</name>
    <dbReference type="NCBI Taxonomy" id="266834"/>
    <lineage>
        <taxon>Bacteria</taxon>
        <taxon>Pseudomonadati</taxon>
        <taxon>Pseudomonadota</taxon>
        <taxon>Alphaproteobacteria</taxon>
        <taxon>Hyphomicrobiales</taxon>
        <taxon>Rhizobiaceae</taxon>
        <taxon>Sinorhizobium/Ensifer group</taxon>
        <taxon>Sinorhizobium</taxon>
    </lineage>
</organism>
<name>PROA_RHIME</name>
<evidence type="ECO:0000255" key="1">
    <source>
        <dbReference type="HAMAP-Rule" id="MF_00412"/>
    </source>
</evidence>
<feature type="chain" id="PRO_0000189772" description="Gamma-glutamyl phosphate reductase">
    <location>
        <begin position="1"/>
        <end position="427"/>
    </location>
</feature>
<proteinExistence type="inferred from homology"/>
<reference key="1">
    <citation type="journal article" date="2001" name="Proc. Natl. Acad. Sci. U.S.A.">
        <title>Analysis of the chromosome sequence of the legume symbiont Sinorhizobium meliloti strain 1021.</title>
        <authorList>
            <person name="Capela D."/>
            <person name="Barloy-Hubler F."/>
            <person name="Gouzy J."/>
            <person name="Bothe G."/>
            <person name="Ampe F."/>
            <person name="Batut J."/>
            <person name="Boistard P."/>
            <person name="Becker A."/>
            <person name="Boutry M."/>
            <person name="Cadieu E."/>
            <person name="Dreano S."/>
            <person name="Gloux S."/>
            <person name="Godrie T."/>
            <person name="Goffeau A."/>
            <person name="Kahn D."/>
            <person name="Kiss E."/>
            <person name="Lelaure V."/>
            <person name="Masuy D."/>
            <person name="Pohl T."/>
            <person name="Portetelle D."/>
            <person name="Puehler A."/>
            <person name="Purnelle B."/>
            <person name="Ramsperger U."/>
            <person name="Renard C."/>
            <person name="Thebault P."/>
            <person name="Vandenbol M."/>
            <person name="Weidner S."/>
            <person name="Galibert F."/>
        </authorList>
    </citation>
    <scope>NUCLEOTIDE SEQUENCE [LARGE SCALE GENOMIC DNA]</scope>
    <source>
        <strain>1021</strain>
    </source>
</reference>
<reference key="2">
    <citation type="journal article" date="2001" name="Science">
        <title>The composite genome of the legume symbiont Sinorhizobium meliloti.</title>
        <authorList>
            <person name="Galibert F."/>
            <person name="Finan T.M."/>
            <person name="Long S.R."/>
            <person name="Puehler A."/>
            <person name="Abola P."/>
            <person name="Ampe F."/>
            <person name="Barloy-Hubler F."/>
            <person name="Barnett M.J."/>
            <person name="Becker A."/>
            <person name="Boistard P."/>
            <person name="Bothe G."/>
            <person name="Boutry M."/>
            <person name="Bowser L."/>
            <person name="Buhrmester J."/>
            <person name="Cadieu E."/>
            <person name="Capela D."/>
            <person name="Chain P."/>
            <person name="Cowie A."/>
            <person name="Davis R.W."/>
            <person name="Dreano S."/>
            <person name="Federspiel N.A."/>
            <person name="Fisher R.F."/>
            <person name="Gloux S."/>
            <person name="Godrie T."/>
            <person name="Goffeau A."/>
            <person name="Golding B."/>
            <person name="Gouzy J."/>
            <person name="Gurjal M."/>
            <person name="Hernandez-Lucas I."/>
            <person name="Hong A."/>
            <person name="Huizar L."/>
            <person name="Hyman R.W."/>
            <person name="Jones T."/>
            <person name="Kahn D."/>
            <person name="Kahn M.L."/>
            <person name="Kalman S."/>
            <person name="Keating D.H."/>
            <person name="Kiss E."/>
            <person name="Komp C."/>
            <person name="Lelaure V."/>
            <person name="Masuy D."/>
            <person name="Palm C."/>
            <person name="Peck M.C."/>
            <person name="Pohl T.M."/>
            <person name="Portetelle D."/>
            <person name="Purnelle B."/>
            <person name="Ramsperger U."/>
            <person name="Surzycki R."/>
            <person name="Thebault P."/>
            <person name="Vandenbol M."/>
            <person name="Vorhoelter F.J."/>
            <person name="Weidner S."/>
            <person name="Wells D.H."/>
            <person name="Wong K."/>
            <person name="Yeh K.-C."/>
            <person name="Batut J."/>
        </authorList>
    </citation>
    <scope>NUCLEOTIDE SEQUENCE [LARGE SCALE GENOMIC DNA]</scope>
    <source>
        <strain>1021</strain>
    </source>
</reference>
<accession>Q92LB2</accession>
<protein>
    <recommendedName>
        <fullName evidence="1">Gamma-glutamyl phosphate reductase</fullName>
        <shortName evidence="1">GPR</shortName>
        <ecNumber evidence="1">1.2.1.41</ecNumber>
    </recommendedName>
    <alternativeName>
        <fullName evidence="1">Glutamate-5-semialdehyde dehydrogenase</fullName>
    </alternativeName>
    <alternativeName>
        <fullName evidence="1">Glutamyl-gamma-semialdehyde dehydrogenase</fullName>
        <shortName evidence="1">GSA dehydrogenase</shortName>
    </alternativeName>
</protein>
<keyword id="KW-0028">Amino-acid biosynthesis</keyword>
<keyword id="KW-0963">Cytoplasm</keyword>
<keyword id="KW-0521">NADP</keyword>
<keyword id="KW-0560">Oxidoreductase</keyword>
<keyword id="KW-0641">Proline biosynthesis</keyword>
<keyword id="KW-1185">Reference proteome</keyword>